<reference key="1">
    <citation type="journal article" date="1997" name="Nature">
        <title>The complete genome sequence of the hyperthermophilic, sulphate-reducing archaeon Archaeoglobus fulgidus.</title>
        <authorList>
            <person name="Klenk H.-P."/>
            <person name="Clayton R.A."/>
            <person name="Tomb J.-F."/>
            <person name="White O."/>
            <person name="Nelson K.E."/>
            <person name="Ketchum K.A."/>
            <person name="Dodson R.J."/>
            <person name="Gwinn M.L."/>
            <person name="Hickey E.K."/>
            <person name="Peterson J.D."/>
            <person name="Richardson D.L."/>
            <person name="Kerlavage A.R."/>
            <person name="Graham D.E."/>
            <person name="Kyrpides N.C."/>
            <person name="Fleischmann R.D."/>
            <person name="Quackenbush J."/>
            <person name="Lee N.H."/>
            <person name="Sutton G.G."/>
            <person name="Gill S.R."/>
            <person name="Kirkness E.F."/>
            <person name="Dougherty B.A."/>
            <person name="McKenney K."/>
            <person name="Adams M.D."/>
            <person name="Loftus B.J."/>
            <person name="Peterson S.N."/>
            <person name="Reich C.I."/>
            <person name="McNeil L.K."/>
            <person name="Badger J.H."/>
            <person name="Glodek A."/>
            <person name="Zhou L."/>
            <person name="Overbeek R."/>
            <person name="Gocayne J.D."/>
            <person name="Weidman J.F."/>
            <person name="McDonald L.A."/>
            <person name="Utterback T.R."/>
            <person name="Cotton M.D."/>
            <person name="Spriggs T."/>
            <person name="Artiach P."/>
            <person name="Kaine B.P."/>
            <person name="Sykes S.M."/>
            <person name="Sadow P.W."/>
            <person name="D'Andrea K.P."/>
            <person name="Bowman C."/>
            <person name="Fujii C."/>
            <person name="Garland S.A."/>
            <person name="Mason T.M."/>
            <person name="Olsen G.J."/>
            <person name="Fraser C.M."/>
            <person name="Smith H.O."/>
            <person name="Woese C.R."/>
            <person name="Venter J.C."/>
        </authorList>
    </citation>
    <scope>NUCLEOTIDE SEQUENCE [LARGE SCALE GENOMIC DNA]</scope>
    <source>
        <strain>ATCC 49558 / DSM 4304 / JCM 9628 / NBRC 100126 / VC-16</strain>
    </source>
</reference>
<protein>
    <recommendedName>
        <fullName>Uncharacterized protein AF_1739</fullName>
    </recommendedName>
</protein>
<organism>
    <name type="scientific">Archaeoglobus fulgidus (strain ATCC 49558 / DSM 4304 / JCM 9628 / NBRC 100126 / VC-16)</name>
    <dbReference type="NCBI Taxonomy" id="224325"/>
    <lineage>
        <taxon>Archaea</taxon>
        <taxon>Methanobacteriati</taxon>
        <taxon>Methanobacteriota</taxon>
        <taxon>Archaeoglobi</taxon>
        <taxon>Archaeoglobales</taxon>
        <taxon>Archaeoglobaceae</taxon>
        <taxon>Archaeoglobus</taxon>
    </lineage>
</organism>
<proteinExistence type="predicted"/>
<feature type="chain" id="PRO_0000128053" description="Uncharacterized protein AF_1739">
    <location>
        <begin position="1"/>
        <end position="368"/>
    </location>
</feature>
<dbReference type="EMBL" id="AE000782">
    <property type="protein sequence ID" value="AAB89519.1"/>
    <property type="molecule type" value="Genomic_DNA"/>
</dbReference>
<dbReference type="PIR" id="B69467">
    <property type="entry name" value="B69467"/>
</dbReference>
<dbReference type="RefSeq" id="WP_010879235.1">
    <property type="nucleotide sequence ID" value="NC_000917.1"/>
</dbReference>
<dbReference type="STRING" id="224325.AF_1739"/>
<dbReference type="PaxDb" id="224325-AF_1739"/>
<dbReference type="EnsemblBacteria" id="AAB89519">
    <property type="protein sequence ID" value="AAB89519"/>
    <property type="gene ID" value="AF_1739"/>
</dbReference>
<dbReference type="GeneID" id="1484962"/>
<dbReference type="KEGG" id="afu:AF_1739"/>
<dbReference type="eggNOG" id="arCOG10161">
    <property type="taxonomic scope" value="Archaea"/>
</dbReference>
<dbReference type="HOGENOM" id="CLU_751427_0_0_2"/>
<dbReference type="Proteomes" id="UP000002199">
    <property type="component" value="Chromosome"/>
</dbReference>
<sequence length="368" mass="41971">MMFLRLREEIARNLRNSGVRAVSPYKVGIGWIDLAIPRKRIGIDILDGSYESCAERLSSHPFRDVIIVDSVEEFCKEFGIPAPELNDEELEAPSAYVKAIEDALAYLYITGEVYEKEIDYRPLNSTLPDLKRFGYAVSYSKPKLNPQMFVCLTHDGYTAAKKVVLRRVELFEKRLRKLSTPENYIIALGMSAGLKVFKTADLEDYDLKSLLSFMRKLSEERFAVDEALHPKTALCRFLVDTALNGKAVKLAQTLSKLGLAFKVKKYSPFGHYLGEEYRIAREAVEALMKFSFAEIPRDYLREFMALTYPLSHSDIYPILSYSGDFLRKAEESGVCRLEGSKITLSEKFVDYAKVRLAMLIEKITEDLP</sequence>
<gene>
    <name type="ordered locus">AF_1739</name>
</gene>
<accession>O28535</accession>
<keyword id="KW-1185">Reference proteome</keyword>
<name>Y1739_ARCFU</name>